<organism>
    <name type="scientific">Symbiobacterium thermophilum (strain DSM 24528 / JCM 14929 / IAM 14863 / T)</name>
    <dbReference type="NCBI Taxonomy" id="292459"/>
    <lineage>
        <taxon>Bacteria</taxon>
        <taxon>Bacillati</taxon>
        <taxon>Bacillota</taxon>
        <taxon>Clostridia</taxon>
        <taxon>Eubacteriales</taxon>
        <taxon>Symbiobacteriaceae</taxon>
        <taxon>Symbiobacterium</taxon>
    </lineage>
</organism>
<protein>
    <recommendedName>
        <fullName evidence="1">Ribonuclease Y</fullName>
        <shortName evidence="1">RNase Y</shortName>
        <ecNumber evidence="1">3.1.-.-</ecNumber>
    </recommendedName>
</protein>
<dbReference type="EC" id="3.1.-.-" evidence="1"/>
<dbReference type="EMBL" id="AP006840">
    <property type="protein sequence ID" value="BAD40764.1"/>
    <property type="molecule type" value="Genomic_DNA"/>
</dbReference>
<dbReference type="RefSeq" id="WP_011195907.1">
    <property type="nucleotide sequence ID" value="NC_006177.1"/>
</dbReference>
<dbReference type="SMR" id="Q67NH9"/>
<dbReference type="STRING" id="292459.STH1779"/>
<dbReference type="KEGG" id="sth:STH1779"/>
<dbReference type="eggNOG" id="COG1418">
    <property type="taxonomic scope" value="Bacteria"/>
</dbReference>
<dbReference type="HOGENOM" id="CLU_028328_1_0_9"/>
<dbReference type="OrthoDB" id="9803205at2"/>
<dbReference type="Proteomes" id="UP000000417">
    <property type="component" value="Chromosome"/>
</dbReference>
<dbReference type="GO" id="GO:0005886">
    <property type="term" value="C:plasma membrane"/>
    <property type="evidence" value="ECO:0007669"/>
    <property type="project" value="UniProtKB-SubCell"/>
</dbReference>
<dbReference type="GO" id="GO:0003723">
    <property type="term" value="F:RNA binding"/>
    <property type="evidence" value="ECO:0007669"/>
    <property type="project" value="UniProtKB-UniRule"/>
</dbReference>
<dbReference type="GO" id="GO:0004521">
    <property type="term" value="F:RNA endonuclease activity"/>
    <property type="evidence" value="ECO:0007669"/>
    <property type="project" value="UniProtKB-UniRule"/>
</dbReference>
<dbReference type="GO" id="GO:0006402">
    <property type="term" value="P:mRNA catabolic process"/>
    <property type="evidence" value="ECO:0007669"/>
    <property type="project" value="UniProtKB-UniRule"/>
</dbReference>
<dbReference type="CDD" id="cd00077">
    <property type="entry name" value="HDc"/>
    <property type="match status" value="1"/>
</dbReference>
<dbReference type="CDD" id="cd22431">
    <property type="entry name" value="KH-I_RNaseY"/>
    <property type="match status" value="1"/>
</dbReference>
<dbReference type="FunFam" id="1.10.3210.10:FF:000022">
    <property type="entry name" value="Ribonuclease Y"/>
    <property type="match status" value="1"/>
</dbReference>
<dbReference type="FunFam" id="3.30.1370.10:FF:000006">
    <property type="entry name" value="Ribonuclease Y"/>
    <property type="match status" value="1"/>
</dbReference>
<dbReference type="Gene3D" id="1.10.3210.10">
    <property type="entry name" value="Hypothetical protein af1432"/>
    <property type="match status" value="1"/>
</dbReference>
<dbReference type="Gene3D" id="3.30.1370.10">
    <property type="entry name" value="K Homology domain, type 1"/>
    <property type="match status" value="1"/>
</dbReference>
<dbReference type="HAMAP" id="MF_00335">
    <property type="entry name" value="RNase_Y"/>
    <property type="match status" value="1"/>
</dbReference>
<dbReference type="InterPro" id="IPR003607">
    <property type="entry name" value="HD/PDEase_dom"/>
</dbReference>
<dbReference type="InterPro" id="IPR006674">
    <property type="entry name" value="HD_domain"/>
</dbReference>
<dbReference type="InterPro" id="IPR006675">
    <property type="entry name" value="HDIG_dom"/>
</dbReference>
<dbReference type="InterPro" id="IPR004087">
    <property type="entry name" value="KH_dom"/>
</dbReference>
<dbReference type="InterPro" id="IPR004088">
    <property type="entry name" value="KH_dom_type_1"/>
</dbReference>
<dbReference type="InterPro" id="IPR036612">
    <property type="entry name" value="KH_dom_type_1_sf"/>
</dbReference>
<dbReference type="InterPro" id="IPR017705">
    <property type="entry name" value="Ribonuclease_Y"/>
</dbReference>
<dbReference type="InterPro" id="IPR022711">
    <property type="entry name" value="RNase_Y_N"/>
</dbReference>
<dbReference type="NCBIfam" id="TIGR00277">
    <property type="entry name" value="HDIG"/>
    <property type="match status" value="1"/>
</dbReference>
<dbReference type="NCBIfam" id="TIGR03319">
    <property type="entry name" value="RNase_Y"/>
    <property type="match status" value="1"/>
</dbReference>
<dbReference type="PANTHER" id="PTHR12826">
    <property type="entry name" value="RIBONUCLEASE Y"/>
    <property type="match status" value="1"/>
</dbReference>
<dbReference type="PANTHER" id="PTHR12826:SF15">
    <property type="entry name" value="RIBONUCLEASE Y"/>
    <property type="match status" value="1"/>
</dbReference>
<dbReference type="Pfam" id="PF01966">
    <property type="entry name" value="HD"/>
    <property type="match status" value="1"/>
</dbReference>
<dbReference type="Pfam" id="PF00013">
    <property type="entry name" value="KH_1"/>
    <property type="match status" value="1"/>
</dbReference>
<dbReference type="Pfam" id="PF12072">
    <property type="entry name" value="RNase_Y_N"/>
    <property type="match status" value="1"/>
</dbReference>
<dbReference type="SMART" id="SM00471">
    <property type="entry name" value="HDc"/>
    <property type="match status" value="1"/>
</dbReference>
<dbReference type="SMART" id="SM00322">
    <property type="entry name" value="KH"/>
    <property type="match status" value="1"/>
</dbReference>
<dbReference type="SUPFAM" id="SSF54791">
    <property type="entry name" value="Eukaryotic type KH-domain (KH-domain type I)"/>
    <property type="match status" value="1"/>
</dbReference>
<dbReference type="SUPFAM" id="SSF109604">
    <property type="entry name" value="HD-domain/PDEase-like"/>
    <property type="match status" value="1"/>
</dbReference>
<dbReference type="PROSITE" id="PS51831">
    <property type="entry name" value="HD"/>
    <property type="match status" value="1"/>
</dbReference>
<dbReference type="PROSITE" id="PS50084">
    <property type="entry name" value="KH_TYPE_1"/>
    <property type="match status" value="1"/>
</dbReference>
<sequence length="517" mass="58573">MKAILYVIVAVIALILGGAAGVAGGYYWFERESRKKLNSAEARARHIVDEALREAEAKKKEAILEAKEEVHRLRTEAERELKERRAELQRLERRVLQKEEQLDRKVEQLERKEETLSRKERELDRKNQQAQELVNKQMAELERISQLTMEEARELFLKQVEQEARADAAKLIREIDAEARENAEKRARELVGLAVQRVAADHSSELTVTVVSLPNDEMKGRIIGREGRNIRTLETLTGVDLIIDDTPEAVVLSAFDPVRREVAKIALQKLIQDGRIHPARIEEMVEKAQKEVEARIREEGDAACFELGIHNLHPELVKLLGRLKFRTSYGQNVLKHSIEVAHLAGIMAAELGVNVEVAKRAGLLHDIGKAVDHEIEGSHVAIGVSLLRRYKEHPDVIHAMECHHGDVEPRSVEAHLVAAADAISAARPGARRETLETYIKRLEKLEALADSFDGVDKSYAIQAGREIRVMVKPEKIDDYAALKLTKEIARKIEEELEYPGQIRVVVVRETRAVEYAR</sequence>
<comment type="function">
    <text evidence="1">Endoribonuclease that initiates mRNA decay.</text>
</comment>
<comment type="subcellular location">
    <subcellularLocation>
        <location evidence="1">Cell membrane</location>
        <topology evidence="1">Single-pass membrane protein</topology>
    </subcellularLocation>
</comment>
<comment type="similarity">
    <text evidence="1">Belongs to the RNase Y family.</text>
</comment>
<keyword id="KW-1003">Cell membrane</keyword>
<keyword id="KW-0255">Endonuclease</keyword>
<keyword id="KW-0378">Hydrolase</keyword>
<keyword id="KW-0472">Membrane</keyword>
<keyword id="KW-0540">Nuclease</keyword>
<keyword id="KW-1185">Reference proteome</keyword>
<keyword id="KW-0694">RNA-binding</keyword>
<keyword id="KW-0812">Transmembrane</keyword>
<keyword id="KW-1133">Transmembrane helix</keyword>
<evidence type="ECO:0000255" key="1">
    <source>
        <dbReference type="HAMAP-Rule" id="MF_00335"/>
    </source>
</evidence>
<evidence type="ECO:0000255" key="2">
    <source>
        <dbReference type="PROSITE-ProRule" id="PRU01175"/>
    </source>
</evidence>
<accession>Q67NH9</accession>
<feature type="chain" id="PRO_0000344957" description="Ribonuclease Y">
    <location>
        <begin position="1"/>
        <end position="517"/>
    </location>
</feature>
<feature type="transmembrane region" description="Helical" evidence="1">
    <location>
        <begin position="3"/>
        <end position="23"/>
    </location>
</feature>
<feature type="domain" description="KH" evidence="1">
    <location>
        <begin position="207"/>
        <end position="292"/>
    </location>
</feature>
<feature type="domain" description="HD" evidence="2">
    <location>
        <begin position="333"/>
        <end position="426"/>
    </location>
</feature>
<gene>
    <name evidence="1" type="primary">rny</name>
    <name type="ordered locus">STH1779</name>
</gene>
<name>RNY_SYMTH</name>
<reference key="1">
    <citation type="journal article" date="2004" name="Nucleic Acids Res.">
        <title>Genome sequence of Symbiobacterium thermophilum, an uncultivable bacterium that depends on microbial commensalism.</title>
        <authorList>
            <person name="Ueda K."/>
            <person name="Yamashita A."/>
            <person name="Ishikawa J."/>
            <person name="Shimada M."/>
            <person name="Watsuji T."/>
            <person name="Morimura K."/>
            <person name="Ikeda H."/>
            <person name="Hattori M."/>
            <person name="Beppu T."/>
        </authorList>
    </citation>
    <scope>NUCLEOTIDE SEQUENCE [LARGE SCALE GENOMIC DNA]</scope>
    <source>
        <strain>DSM 24528 / JCM 14929 / IAM 14863 / T</strain>
    </source>
</reference>
<proteinExistence type="inferred from homology"/>